<dbReference type="EMBL" id="FN997582">
    <property type="protein sequence ID" value="CBQ82558.1"/>
    <property type="molecule type" value="mRNA"/>
</dbReference>
<dbReference type="PDB" id="2L3I">
    <property type="method" value="NMR"/>
    <property type="chains" value="A=48-77"/>
</dbReference>
<dbReference type="PDBsum" id="2L3I"/>
<dbReference type="BMRB" id="F8J4S0"/>
<dbReference type="SMR" id="F8J4S0"/>
<dbReference type="ArachnoServer" id="AS001793">
    <property type="toxin name" value="Mu-oxotoxin-Ot4a"/>
</dbReference>
<dbReference type="EvolutionaryTrace" id="F8J4S0"/>
<dbReference type="GO" id="GO:0005576">
    <property type="term" value="C:extracellular region"/>
    <property type="evidence" value="ECO:0000314"/>
    <property type="project" value="UniProtKB"/>
</dbReference>
<dbReference type="GO" id="GO:0016020">
    <property type="term" value="C:membrane"/>
    <property type="evidence" value="ECO:0007669"/>
    <property type="project" value="UniProtKB-KW"/>
</dbReference>
<dbReference type="GO" id="GO:0044218">
    <property type="term" value="C:other organism cell membrane"/>
    <property type="evidence" value="ECO:0007669"/>
    <property type="project" value="UniProtKB-KW"/>
</dbReference>
<dbReference type="GO" id="GO:0090729">
    <property type="term" value="F:toxin activity"/>
    <property type="evidence" value="ECO:0000314"/>
    <property type="project" value="UniProtKB"/>
</dbReference>
<dbReference type="GO" id="GO:0050829">
    <property type="term" value="P:defense response to Gram-negative bacterium"/>
    <property type="evidence" value="ECO:0000314"/>
    <property type="project" value="UniProtKB"/>
</dbReference>
<dbReference type="GO" id="GO:0050830">
    <property type="term" value="P:defense response to Gram-positive bacterium"/>
    <property type="evidence" value="ECO:0000314"/>
    <property type="project" value="UniProtKB"/>
</dbReference>
<dbReference type="GO" id="GO:0044179">
    <property type="term" value="P:hemolysis in another organism"/>
    <property type="evidence" value="ECO:0000314"/>
    <property type="project" value="UniProtKB"/>
</dbReference>
<sequence length="77" mass="9205">MKISQVFIFVFLLMISVAWANEAYEEESNYLSERFDADVEEITPEFRGIRCPKSWKCKAFKQRVLKRLLAMLRQHAF</sequence>
<evidence type="ECO:0000255" key="1"/>
<evidence type="ECO:0000269" key="2">
    <source>
    </source>
</evidence>
<evidence type="ECO:0000303" key="3">
    <source>
    </source>
</evidence>
<evidence type="ECO:0000305" key="4"/>
<evidence type="ECO:0000305" key="5">
    <source>
    </source>
</evidence>
<evidence type="ECO:0007829" key="6">
    <source>
        <dbReference type="PDB" id="2L3I"/>
    </source>
</evidence>
<reference key="1">
    <citation type="journal article" date="2011" name="FEBS J.">
        <title>Novel lynx spider toxin shares common molecular architecture with defense peptides from frog skin.</title>
        <authorList>
            <person name="Dubovskii P.V."/>
            <person name="Vassilevski A.A."/>
            <person name="Samsonova O.V."/>
            <person name="Egorova N.S."/>
            <person name="Kozlov S.A."/>
            <person name="Feofanov A.V."/>
            <person name="Arseniev A.S."/>
            <person name="Grishin E.V."/>
        </authorList>
    </citation>
    <scope>NUCLEOTIDE SEQUENCE [MRNA]</scope>
    <scope>PROTEIN SEQUENCE OF 48-77</scope>
    <scope>FUNCTION</scope>
    <scope>SUBCELLULAR LOCATION</scope>
    <scope>TISSUE SPECIFICITY</scope>
    <scope>MASS SPECTROMETRY</scope>
    <scope>DISULFIDE BOND</scope>
    <scope>STRUCTURE BY NMR</scope>
    <source>
        <tissue>Venom</tissue>
        <tissue>Venom gland</tissue>
    </source>
</reference>
<organism>
    <name type="scientific">Oxyopes takobius</name>
    <name type="common">Lynx spider</name>
    <name type="synonym">Oxyopes foliiformis</name>
    <dbReference type="NCBI Taxonomy" id="666126"/>
    <lineage>
        <taxon>Eukaryota</taxon>
        <taxon>Metazoa</taxon>
        <taxon>Ecdysozoa</taxon>
        <taxon>Arthropoda</taxon>
        <taxon>Chelicerata</taxon>
        <taxon>Arachnida</taxon>
        <taxon>Araneae</taxon>
        <taxon>Araneomorphae</taxon>
        <taxon>Entelegynae</taxon>
        <taxon>Lycosoidea</taxon>
        <taxon>Oxyopidae</taxon>
        <taxon>Oxyopes</taxon>
    </lineage>
</organism>
<name>TOP4A_OXYTA</name>
<feature type="signal peptide" evidence="1">
    <location>
        <begin position="1"/>
        <end position="20"/>
    </location>
</feature>
<feature type="propeptide" id="PRO_5000770556" evidence="2">
    <location>
        <begin position="21"/>
        <end position="47"/>
    </location>
</feature>
<feature type="peptide" id="PRO_5000770557" description="Oxyopinin-4a" evidence="2">
    <location>
        <begin position="48"/>
        <end position="77"/>
    </location>
</feature>
<feature type="disulfide bond" evidence="2">
    <location>
        <begin position="51"/>
        <end position="57"/>
    </location>
</feature>
<feature type="strand" evidence="6">
    <location>
        <begin position="51"/>
        <end position="53"/>
    </location>
</feature>
<feature type="helix" evidence="6">
    <location>
        <begin position="59"/>
        <end position="73"/>
    </location>
</feature>
<protein>
    <recommendedName>
        <fullName evidence="3">Oxyopinin-4a</fullName>
        <shortName evidence="3">Oxt-4a</shortName>
    </recommendedName>
</protein>
<accession>F8J4S0</accession>
<accession>P86350</accession>
<comment type="function">
    <text evidence="2 4">Disrupts cell membranes through the formation of pores (Probable). Has antibacterial activity against Gram-positive bacteria S.aureus (MIC=10 uM) and B.subtilis (MIC=0.5 uM) as well as Gram-negative bacteria P.fluorescens (MIC=1 uM) and E.coli (MIC=0.5 uM). Has hemolytic activity against human erythrocytes (EC(50)=7 uM).</text>
</comment>
<comment type="subcellular location">
    <subcellularLocation>
        <location evidence="2 3">Secreted</location>
    </subcellularLocation>
    <subcellularLocation>
        <location evidence="5">Target cell membrane</location>
    </subcellularLocation>
    <text evidence="2 3">Probably forms a transmembrane alpha-helix in the target cell membrane.</text>
</comment>
<comment type="tissue specificity">
    <text evidence="2">Expressed by the venom gland.</text>
</comment>
<comment type="mass spectrometry" mass="3612.5" method="MALDI" evidence="2"/>
<proteinExistence type="evidence at protein level"/>
<keyword id="KW-0002">3D-structure</keyword>
<keyword id="KW-0044">Antibiotic</keyword>
<keyword id="KW-0929">Antimicrobial</keyword>
<keyword id="KW-0204">Cytolysis</keyword>
<keyword id="KW-0903">Direct protein sequencing</keyword>
<keyword id="KW-1015">Disulfide bond</keyword>
<keyword id="KW-0354">Hemolysis</keyword>
<keyword id="KW-0472">Membrane</keyword>
<keyword id="KW-0964">Secreted</keyword>
<keyword id="KW-0732">Signal</keyword>
<keyword id="KW-1052">Target cell membrane</keyword>
<keyword id="KW-1053">Target membrane</keyword>
<keyword id="KW-0800">Toxin</keyword>